<reference key="1">
    <citation type="journal article" date="2008" name="J. Bacteriol.">
        <title>The complete genome sequence of Escherichia coli DH10B: insights into the biology of a laboratory workhorse.</title>
        <authorList>
            <person name="Durfee T."/>
            <person name="Nelson R."/>
            <person name="Baldwin S."/>
            <person name="Plunkett G. III"/>
            <person name="Burland V."/>
            <person name="Mau B."/>
            <person name="Petrosino J.F."/>
            <person name="Qin X."/>
            <person name="Muzny D.M."/>
            <person name="Ayele M."/>
            <person name="Gibbs R.A."/>
            <person name="Csorgo B."/>
            <person name="Posfai G."/>
            <person name="Weinstock G.M."/>
            <person name="Blattner F.R."/>
        </authorList>
    </citation>
    <scope>NUCLEOTIDE SEQUENCE [LARGE SCALE GENOMIC DNA]</scope>
    <source>
        <strain>K12 / DH10B</strain>
    </source>
</reference>
<name>MNMG_ECODH</name>
<organism>
    <name type="scientific">Escherichia coli (strain K12 / DH10B)</name>
    <dbReference type="NCBI Taxonomy" id="316385"/>
    <lineage>
        <taxon>Bacteria</taxon>
        <taxon>Pseudomonadati</taxon>
        <taxon>Pseudomonadota</taxon>
        <taxon>Gammaproteobacteria</taxon>
        <taxon>Enterobacterales</taxon>
        <taxon>Enterobacteriaceae</taxon>
        <taxon>Escherichia</taxon>
    </lineage>
</organism>
<keyword id="KW-0963">Cytoplasm</keyword>
<keyword id="KW-0274">FAD</keyword>
<keyword id="KW-0285">Flavoprotein</keyword>
<keyword id="KW-0520">NAD</keyword>
<keyword id="KW-0819">tRNA processing</keyword>
<gene>
    <name evidence="1" type="primary">mnmG</name>
    <name evidence="1" type="synonym">gidA</name>
    <name type="ordered locus">ECDH10B_3928</name>
</gene>
<evidence type="ECO:0000255" key="1">
    <source>
        <dbReference type="HAMAP-Rule" id="MF_00129"/>
    </source>
</evidence>
<accession>B1X9W9</accession>
<proteinExistence type="inferred from homology"/>
<comment type="function">
    <text evidence="1">NAD-binding protein involved in the addition of a carboxymethylaminomethyl (cmnm) group at the wobble position (U34) of certain tRNAs, forming tRNA-cmnm(5)s(2)U34.</text>
</comment>
<comment type="cofactor">
    <cofactor evidence="1">
        <name>FAD</name>
        <dbReference type="ChEBI" id="CHEBI:57692"/>
    </cofactor>
</comment>
<comment type="subunit">
    <text evidence="1">Homodimer. Heterotetramer of two MnmE and two MnmG subunits.</text>
</comment>
<comment type="subcellular location">
    <subcellularLocation>
        <location evidence="1">Cytoplasm</location>
    </subcellularLocation>
</comment>
<comment type="similarity">
    <text evidence="1">Belongs to the MnmG family.</text>
</comment>
<sequence>MFYPDPFDVIIIGGGHAGTEAAMAAARMGQQTLLLTHNIDTLGQMSCNPAIGGIGKGHLVKEVDALGGLMAKAIDQAGIQFRILNASKGPAVRATRAQADRVLYRQAVRTALENQPNLMIFQQAVEDLIVENDRVVGAVTQMGLKFRAKAVVLTVGTFLDGKIHIGLDNYSGGRAGDPPSIPLSRRLRELPLRVGRLKTGTPPRIDARTIDFSVLAQQHGDNPMPVFSFMGNASQHPQQVPCYITHTNEKTHDVIRSNLDRSPMYAGVIEGVGPRYCPSIEDKVMRFADRNQHQIFLEPEGLTSNEIYPNGISTSLPFDVQMQIVRSMQGMENAKIVRPGYAIEYDFFDPRDLKPTLESKFIQGLFFAGQINGTTGYEEAAAQGLLAGLNAARLSADKEGWAPARSQAYLGVLVDDLCTLGTKEPYRMFTSRAEYRLMLREDNADLRLTEIGRELGLVDDERWARFNEKLENIERERQRLKSTWVTPSAEAAAEVNAHLTAPLSREASGEDLLRRPEMTYEKLTTLTPFAPALTDEQAAEQVEIQVKYEGYIARQQDEIEKQLRNENTLLPATLDYRQVSGLSNEVIAKLNDHKPASIGQASRISGVTPAAISILLVWLKKQGMLRRSA</sequence>
<protein>
    <recommendedName>
        <fullName evidence="1">tRNA uridine 5-carboxymethylaminomethyl modification enzyme MnmG</fullName>
    </recommendedName>
    <alternativeName>
        <fullName evidence="1">Glucose-inhibited division protein A</fullName>
    </alternativeName>
</protein>
<feature type="chain" id="PRO_0000345267" description="tRNA uridine 5-carboxymethylaminomethyl modification enzyme MnmG">
    <location>
        <begin position="1"/>
        <end position="629"/>
    </location>
</feature>
<feature type="binding site" evidence="1">
    <location>
        <begin position="13"/>
        <end position="18"/>
    </location>
    <ligand>
        <name>FAD</name>
        <dbReference type="ChEBI" id="CHEBI:57692"/>
    </ligand>
</feature>
<feature type="binding site" evidence="1">
    <location>
        <position position="125"/>
    </location>
    <ligand>
        <name>FAD</name>
        <dbReference type="ChEBI" id="CHEBI:57692"/>
    </ligand>
</feature>
<feature type="binding site" evidence="1">
    <location>
        <position position="180"/>
    </location>
    <ligand>
        <name>FAD</name>
        <dbReference type="ChEBI" id="CHEBI:57692"/>
    </ligand>
</feature>
<feature type="binding site" evidence="1">
    <location>
        <begin position="273"/>
        <end position="287"/>
    </location>
    <ligand>
        <name>NAD(+)</name>
        <dbReference type="ChEBI" id="CHEBI:57540"/>
    </ligand>
</feature>
<feature type="binding site" evidence="1">
    <location>
        <position position="370"/>
    </location>
    <ligand>
        <name>FAD</name>
        <dbReference type="ChEBI" id="CHEBI:57692"/>
    </ligand>
</feature>
<dbReference type="EMBL" id="CP000948">
    <property type="protein sequence ID" value="ACB04784.1"/>
    <property type="molecule type" value="Genomic_DNA"/>
</dbReference>
<dbReference type="RefSeq" id="WP_000499788.1">
    <property type="nucleotide sequence ID" value="NC_010473.1"/>
</dbReference>
<dbReference type="SMR" id="B1X9W9"/>
<dbReference type="GeneID" id="75205459"/>
<dbReference type="KEGG" id="ecd:ECDH10B_3928"/>
<dbReference type="HOGENOM" id="CLU_007831_2_2_6"/>
<dbReference type="GO" id="GO:0005829">
    <property type="term" value="C:cytosol"/>
    <property type="evidence" value="ECO:0007669"/>
    <property type="project" value="TreeGrafter"/>
</dbReference>
<dbReference type="GO" id="GO:0050660">
    <property type="term" value="F:flavin adenine dinucleotide binding"/>
    <property type="evidence" value="ECO:0007669"/>
    <property type="project" value="UniProtKB-UniRule"/>
</dbReference>
<dbReference type="GO" id="GO:0030488">
    <property type="term" value="P:tRNA methylation"/>
    <property type="evidence" value="ECO:0007669"/>
    <property type="project" value="TreeGrafter"/>
</dbReference>
<dbReference type="GO" id="GO:0002098">
    <property type="term" value="P:tRNA wobble uridine modification"/>
    <property type="evidence" value="ECO:0007669"/>
    <property type="project" value="InterPro"/>
</dbReference>
<dbReference type="FunFam" id="1.10.10.1800:FF:000001">
    <property type="entry name" value="tRNA uridine 5-carboxymethylaminomethyl modification enzyme MnmG"/>
    <property type="match status" value="1"/>
</dbReference>
<dbReference type="FunFam" id="1.10.150.570:FF:000001">
    <property type="entry name" value="tRNA uridine 5-carboxymethylaminomethyl modification enzyme MnmG"/>
    <property type="match status" value="1"/>
</dbReference>
<dbReference type="FunFam" id="3.50.50.60:FF:000002">
    <property type="entry name" value="tRNA uridine 5-carboxymethylaminomethyl modification enzyme MnmG"/>
    <property type="match status" value="1"/>
</dbReference>
<dbReference type="FunFam" id="3.50.50.60:FF:000010">
    <property type="entry name" value="tRNA uridine 5-carboxymethylaminomethyl modification enzyme MnmG"/>
    <property type="match status" value="1"/>
</dbReference>
<dbReference type="Gene3D" id="3.50.50.60">
    <property type="entry name" value="FAD/NAD(P)-binding domain"/>
    <property type="match status" value="2"/>
</dbReference>
<dbReference type="Gene3D" id="1.10.150.570">
    <property type="entry name" value="GidA associated domain, C-terminal subdomain"/>
    <property type="match status" value="1"/>
</dbReference>
<dbReference type="Gene3D" id="1.10.10.1800">
    <property type="entry name" value="tRNA uridine 5-carboxymethylaminomethyl modification enzyme MnmG/GidA"/>
    <property type="match status" value="1"/>
</dbReference>
<dbReference type="HAMAP" id="MF_00129">
    <property type="entry name" value="MnmG_GidA"/>
    <property type="match status" value="1"/>
</dbReference>
<dbReference type="InterPro" id="IPR036188">
    <property type="entry name" value="FAD/NAD-bd_sf"/>
</dbReference>
<dbReference type="InterPro" id="IPR049312">
    <property type="entry name" value="GIDA_C_N"/>
</dbReference>
<dbReference type="InterPro" id="IPR004416">
    <property type="entry name" value="MnmG"/>
</dbReference>
<dbReference type="InterPro" id="IPR002218">
    <property type="entry name" value="MnmG-rel"/>
</dbReference>
<dbReference type="InterPro" id="IPR020595">
    <property type="entry name" value="MnmG-rel_CS"/>
</dbReference>
<dbReference type="InterPro" id="IPR026904">
    <property type="entry name" value="MnmG_C"/>
</dbReference>
<dbReference type="InterPro" id="IPR047001">
    <property type="entry name" value="MnmG_C_subdom"/>
</dbReference>
<dbReference type="InterPro" id="IPR044920">
    <property type="entry name" value="MnmG_C_subdom_sf"/>
</dbReference>
<dbReference type="InterPro" id="IPR040131">
    <property type="entry name" value="MnmG_N"/>
</dbReference>
<dbReference type="NCBIfam" id="TIGR00136">
    <property type="entry name" value="mnmG_gidA"/>
    <property type="match status" value="1"/>
</dbReference>
<dbReference type="PANTHER" id="PTHR11806">
    <property type="entry name" value="GLUCOSE INHIBITED DIVISION PROTEIN A"/>
    <property type="match status" value="1"/>
</dbReference>
<dbReference type="PANTHER" id="PTHR11806:SF0">
    <property type="entry name" value="PROTEIN MTO1 HOMOLOG, MITOCHONDRIAL"/>
    <property type="match status" value="1"/>
</dbReference>
<dbReference type="Pfam" id="PF01134">
    <property type="entry name" value="GIDA"/>
    <property type="match status" value="1"/>
</dbReference>
<dbReference type="Pfam" id="PF21680">
    <property type="entry name" value="GIDA_C_1st"/>
    <property type="match status" value="1"/>
</dbReference>
<dbReference type="Pfam" id="PF13932">
    <property type="entry name" value="SAM_GIDA_C"/>
    <property type="match status" value="1"/>
</dbReference>
<dbReference type="SMART" id="SM01228">
    <property type="entry name" value="GIDA_assoc_3"/>
    <property type="match status" value="1"/>
</dbReference>
<dbReference type="SUPFAM" id="SSF51905">
    <property type="entry name" value="FAD/NAD(P)-binding domain"/>
    <property type="match status" value="1"/>
</dbReference>
<dbReference type="PROSITE" id="PS01280">
    <property type="entry name" value="GIDA_1"/>
    <property type="match status" value="1"/>
</dbReference>
<dbReference type="PROSITE" id="PS01281">
    <property type="entry name" value="GIDA_2"/>
    <property type="match status" value="1"/>
</dbReference>